<keyword id="KW-0002">3D-structure</keyword>
<keyword id="KW-0687">Ribonucleoprotein</keyword>
<keyword id="KW-0689">Ribosomal protein</keyword>
<organism>
    <name type="scientific">Candida albicans</name>
    <name type="common">Yeast</name>
    <dbReference type="NCBI Taxonomy" id="5476"/>
    <lineage>
        <taxon>Eukaryota</taxon>
        <taxon>Fungi</taxon>
        <taxon>Dikarya</taxon>
        <taxon>Ascomycota</taxon>
        <taxon>Saccharomycotina</taxon>
        <taxon>Pichiomycetes</taxon>
        <taxon>Debaryomycetaceae</taxon>
        <taxon>Candida/Lodderomyces clade</taxon>
        <taxon>Candida</taxon>
    </lineage>
</organism>
<accession>Q9P843</accession>
<comment type="similarity">
    <text evidence="1">Belongs to the eukaryotic ribosomal protein eL27 family.</text>
</comment>
<gene>
    <name type="primary">RPL27</name>
</gene>
<reference key="1">
    <citation type="submission" date="1999-12" db="EMBL/GenBank/DDBJ databases">
        <title>A novel method for systematic identification of genes required for growth of Candida albicans.</title>
        <authorList>
            <person name="De Backer M.D."/>
            <person name="Logghe M."/>
            <person name="Viaene J."/>
            <person name="Loonen I."/>
            <person name="Vandoninck S."/>
            <person name="de Hoogt R."/>
            <person name="Nelissen B."/>
            <person name="Dewaele S."/>
            <person name="Simons F."/>
            <person name="Verhasselt P."/>
            <person name="Contreras R."/>
            <person name="Luyten W.H.M.L."/>
        </authorList>
    </citation>
    <scope>NUCLEOTIDE SEQUENCE [MRNA]</scope>
</reference>
<protein>
    <recommendedName>
        <fullName evidence="1">Large ribosomal subunit protein eL27</fullName>
    </recommendedName>
    <alternativeName>
        <fullName>60S ribosomal protein L27</fullName>
    </alternativeName>
</protein>
<feature type="chain" id="PRO_0000126089" description="Large ribosomal subunit protein eL27">
    <location>
        <begin position="1"/>
        <end position="136"/>
    </location>
</feature>
<proteinExistence type="evidence at protein level"/>
<sequence length="136" mass="15514">MAKFIKSGKVAIVVRGRYAGKKVVIVKPHDEGTKSHPFPHAIVAGIERAPLKVTKKMDAKKVTKRTKVKPFVKLVNYNHLMPTRYSLDVESFKSAVTSEALEEPSQREEAKKVVKKAFEEKHQAGKNKWFFQKLHF</sequence>
<evidence type="ECO:0000305" key="1"/>
<dbReference type="EMBL" id="AJ390496">
    <property type="protein sequence ID" value="CAB77636.1"/>
    <property type="molecule type" value="mRNA"/>
</dbReference>
<dbReference type="PDB" id="8C3A">
    <property type="method" value="X-ray"/>
    <property type="resolution" value="3.00 A"/>
    <property type="chains" value="AA/BU=1-136"/>
</dbReference>
<dbReference type="PDB" id="8CQ7">
    <property type="method" value="X-ray"/>
    <property type="resolution" value="3.20 A"/>
    <property type="chains" value="AA/BU=1-136"/>
</dbReference>
<dbReference type="PDB" id="8CQW">
    <property type="method" value="X-ray"/>
    <property type="resolution" value="3.05 A"/>
    <property type="chains" value="AA/BU=1-136"/>
</dbReference>
<dbReference type="PDB" id="8CRE">
    <property type="method" value="X-ray"/>
    <property type="resolution" value="3.00 A"/>
    <property type="chains" value="AA/BU=1-136"/>
</dbReference>
<dbReference type="PDB" id="8OEQ">
    <property type="method" value="X-ray"/>
    <property type="resolution" value="3.30 A"/>
    <property type="chains" value="AA/BU=1-136"/>
</dbReference>
<dbReference type="PDB" id="8OGJ">
    <property type="method" value="EM"/>
    <property type="resolution" value="3.10 A"/>
    <property type="chains" value="AA=1-136"/>
</dbReference>
<dbReference type="PDB" id="8OH6">
    <property type="method" value="X-ray"/>
    <property type="resolution" value="3.35 A"/>
    <property type="chains" value="AA/BU=1-136"/>
</dbReference>
<dbReference type="PDB" id="8OI5">
    <property type="method" value="X-ray"/>
    <property type="resolution" value="2.90 A"/>
    <property type="chains" value="AA/BU=1-136"/>
</dbReference>
<dbReference type="PDB" id="8OJ3">
    <property type="method" value="X-ray"/>
    <property type="resolution" value="3.50 A"/>
    <property type="chains" value="AA/BU=1-136"/>
</dbReference>
<dbReference type="PDB" id="8Q5I">
    <property type="method" value="EM"/>
    <property type="resolution" value="2.45 A"/>
    <property type="chains" value="AA=1-136"/>
</dbReference>
<dbReference type="PDBsum" id="8C3A"/>
<dbReference type="PDBsum" id="8CQ7"/>
<dbReference type="PDBsum" id="8CQW"/>
<dbReference type="PDBsum" id="8CRE"/>
<dbReference type="PDBsum" id="8OEQ"/>
<dbReference type="PDBsum" id="8OGJ"/>
<dbReference type="PDBsum" id="8OH6"/>
<dbReference type="PDBsum" id="8OI5"/>
<dbReference type="PDBsum" id="8OJ3"/>
<dbReference type="PDBsum" id="8Q5I"/>
<dbReference type="EMDB" id="EMD-16874"/>
<dbReference type="SMR" id="Q9P843"/>
<dbReference type="EnsemblFungi" id="C1_12390C_A-T">
    <property type="protein sequence ID" value="C1_12390C_A-T-p1"/>
    <property type="gene ID" value="C1_12390C_A"/>
</dbReference>
<dbReference type="VEuPathDB" id="FungiDB:C1_12390C_A"/>
<dbReference type="VEuPathDB" id="FungiDB:CAWG_00202"/>
<dbReference type="PhylomeDB" id="Q9P843"/>
<dbReference type="GO" id="GO:1990904">
    <property type="term" value="C:ribonucleoprotein complex"/>
    <property type="evidence" value="ECO:0007669"/>
    <property type="project" value="UniProtKB-KW"/>
</dbReference>
<dbReference type="GO" id="GO:0005840">
    <property type="term" value="C:ribosome"/>
    <property type="evidence" value="ECO:0007669"/>
    <property type="project" value="UniProtKB-KW"/>
</dbReference>
<dbReference type="GO" id="GO:0003735">
    <property type="term" value="F:structural constituent of ribosome"/>
    <property type="evidence" value="ECO:0007669"/>
    <property type="project" value="InterPro"/>
</dbReference>
<dbReference type="GO" id="GO:0006412">
    <property type="term" value="P:translation"/>
    <property type="evidence" value="ECO:0007669"/>
    <property type="project" value="InterPro"/>
</dbReference>
<dbReference type="CDD" id="cd06090">
    <property type="entry name" value="KOW_RPL27"/>
    <property type="match status" value="1"/>
</dbReference>
<dbReference type="FunFam" id="2.30.30.770:FF:000001">
    <property type="entry name" value="60S ribosomal protein L27"/>
    <property type="match status" value="1"/>
</dbReference>
<dbReference type="Gene3D" id="2.30.30.770">
    <property type="match status" value="1"/>
</dbReference>
<dbReference type="InterPro" id="IPR001141">
    <property type="entry name" value="Ribosomal_eL27"/>
</dbReference>
<dbReference type="InterPro" id="IPR018262">
    <property type="entry name" value="Ribosomal_eL27_CS"/>
</dbReference>
<dbReference type="InterPro" id="IPR041991">
    <property type="entry name" value="Ribosomal_eL27_KOW"/>
</dbReference>
<dbReference type="InterPro" id="IPR038655">
    <property type="entry name" value="Ribosomal_eL27_sf"/>
</dbReference>
<dbReference type="InterPro" id="IPR008991">
    <property type="entry name" value="Translation_prot_SH3-like_sf"/>
</dbReference>
<dbReference type="PANTHER" id="PTHR10497">
    <property type="entry name" value="60S RIBOSOMAL PROTEIN L27"/>
    <property type="match status" value="1"/>
</dbReference>
<dbReference type="Pfam" id="PF01777">
    <property type="entry name" value="Ribosomal_L27e"/>
    <property type="match status" value="1"/>
</dbReference>
<dbReference type="SUPFAM" id="SSF50104">
    <property type="entry name" value="Translation proteins SH3-like domain"/>
    <property type="match status" value="1"/>
</dbReference>
<dbReference type="PROSITE" id="PS01107">
    <property type="entry name" value="RIBOSOMAL_L27E"/>
    <property type="match status" value="1"/>
</dbReference>
<name>RL27_CANAX</name>